<sequence length="444" mass="48098">MLRNDTITAIATPPGEGSIAIVRVSGPDAISISDRIFSGNIAGYASHTAHLGTVSHNAVCIDQALVLVMRAPRSFTGEDIVEFQCHGGYFACSQIVNALLAEGARAALPGEFSQRAFLNGKIDLIQAEAIQQLIAADNIDAFRIAQNQFQGHTSQAISSISSLIIEALAYIEVLADFPEEDIETEDSLPKHRIMEALSITDELLSSFDEGQRLAQGTSIVLAGLPNAGKSSILNALTQKNRAIVTDIPGTTRDILEENWVLQGKNLRLIDSAGLRETENLVEKEGIARAREAMSQAEGILWVVDASQPLPEFPTILYQKPTILLWNKCDIVSPPQIEVPFQQISVSAKTGEGLLELKQALQKWLNTTQLGKSSKIFLVSARHHSLLHSVYTCLTAALNGFTEHLPNECIALDLRQALHSIGNLSGSEVTENVLGEIFSKFCIGK</sequence>
<proteinExistence type="inferred from homology"/>
<name>MNME_CHLTB</name>
<accession>B0BAF3</accession>
<comment type="function">
    <text evidence="1">Exhibits a very high intrinsic GTPase hydrolysis rate. Involved in the addition of a carboxymethylaminomethyl (cmnm) group at the wobble position (U34) of certain tRNAs, forming tRNA-cmnm(5)s(2)U34.</text>
</comment>
<comment type="cofactor">
    <cofactor evidence="1">
        <name>K(+)</name>
        <dbReference type="ChEBI" id="CHEBI:29103"/>
    </cofactor>
    <text evidence="1">Binds 1 potassium ion per subunit.</text>
</comment>
<comment type="subunit">
    <text evidence="1">Homodimer. Heterotetramer of two MnmE and two MnmG subunits.</text>
</comment>
<comment type="subcellular location">
    <subcellularLocation>
        <location evidence="1">Cytoplasm</location>
    </subcellularLocation>
</comment>
<comment type="similarity">
    <text evidence="1">Belongs to the TRAFAC class TrmE-Era-EngA-EngB-Septin-like GTPase superfamily. TrmE GTPase family.</text>
</comment>
<protein>
    <recommendedName>
        <fullName evidence="1">tRNA modification GTPase MnmE</fullName>
        <ecNumber evidence="1">3.6.-.-</ecNumber>
    </recommendedName>
</protein>
<dbReference type="EC" id="3.6.-.-" evidence="1"/>
<dbReference type="EMBL" id="AM884177">
    <property type="protein sequence ID" value="CAP06465.1"/>
    <property type="molecule type" value="Genomic_DNA"/>
</dbReference>
<dbReference type="RefSeq" id="WP_009872073.1">
    <property type="nucleotide sequence ID" value="NC_010280.2"/>
</dbReference>
<dbReference type="SMR" id="B0BAF3"/>
<dbReference type="KEGG" id="ctl:CTLon_0067"/>
<dbReference type="HOGENOM" id="CLU_019624_4_1_0"/>
<dbReference type="Proteomes" id="UP001154401">
    <property type="component" value="Chromosome"/>
</dbReference>
<dbReference type="GO" id="GO:0005829">
    <property type="term" value="C:cytosol"/>
    <property type="evidence" value="ECO:0007669"/>
    <property type="project" value="TreeGrafter"/>
</dbReference>
<dbReference type="GO" id="GO:0005525">
    <property type="term" value="F:GTP binding"/>
    <property type="evidence" value="ECO:0007669"/>
    <property type="project" value="UniProtKB-UniRule"/>
</dbReference>
<dbReference type="GO" id="GO:0003924">
    <property type="term" value="F:GTPase activity"/>
    <property type="evidence" value="ECO:0007669"/>
    <property type="project" value="UniProtKB-UniRule"/>
</dbReference>
<dbReference type="GO" id="GO:0046872">
    <property type="term" value="F:metal ion binding"/>
    <property type="evidence" value="ECO:0007669"/>
    <property type="project" value="UniProtKB-KW"/>
</dbReference>
<dbReference type="GO" id="GO:0030488">
    <property type="term" value="P:tRNA methylation"/>
    <property type="evidence" value="ECO:0007669"/>
    <property type="project" value="TreeGrafter"/>
</dbReference>
<dbReference type="GO" id="GO:0002098">
    <property type="term" value="P:tRNA wobble uridine modification"/>
    <property type="evidence" value="ECO:0007669"/>
    <property type="project" value="TreeGrafter"/>
</dbReference>
<dbReference type="CDD" id="cd04164">
    <property type="entry name" value="trmE"/>
    <property type="match status" value="1"/>
</dbReference>
<dbReference type="CDD" id="cd14858">
    <property type="entry name" value="TrmE_N"/>
    <property type="match status" value="1"/>
</dbReference>
<dbReference type="FunFam" id="3.30.1360.120:FF:000003">
    <property type="entry name" value="tRNA modification GTPase MnmE"/>
    <property type="match status" value="1"/>
</dbReference>
<dbReference type="FunFam" id="3.40.50.300:FF:001376">
    <property type="entry name" value="tRNA modification GTPase MnmE"/>
    <property type="match status" value="1"/>
</dbReference>
<dbReference type="Gene3D" id="3.40.50.300">
    <property type="entry name" value="P-loop containing nucleotide triphosphate hydrolases"/>
    <property type="match status" value="1"/>
</dbReference>
<dbReference type="Gene3D" id="3.30.1360.120">
    <property type="entry name" value="Probable tRNA modification gtpase trme, domain 1"/>
    <property type="match status" value="1"/>
</dbReference>
<dbReference type="Gene3D" id="1.20.120.430">
    <property type="entry name" value="tRNA modification GTPase MnmE domain 2"/>
    <property type="match status" value="1"/>
</dbReference>
<dbReference type="HAMAP" id="MF_00379">
    <property type="entry name" value="GTPase_MnmE"/>
    <property type="match status" value="1"/>
</dbReference>
<dbReference type="InterPro" id="IPR031168">
    <property type="entry name" value="G_TrmE"/>
</dbReference>
<dbReference type="InterPro" id="IPR006073">
    <property type="entry name" value="GTP-bd"/>
</dbReference>
<dbReference type="InterPro" id="IPR018948">
    <property type="entry name" value="GTP-bd_TrmE_N"/>
</dbReference>
<dbReference type="InterPro" id="IPR004520">
    <property type="entry name" value="GTPase_MnmE"/>
</dbReference>
<dbReference type="InterPro" id="IPR027368">
    <property type="entry name" value="MnmE_dom2"/>
</dbReference>
<dbReference type="InterPro" id="IPR025867">
    <property type="entry name" value="MnmE_helical"/>
</dbReference>
<dbReference type="InterPro" id="IPR027417">
    <property type="entry name" value="P-loop_NTPase"/>
</dbReference>
<dbReference type="InterPro" id="IPR005225">
    <property type="entry name" value="Small_GTP-bd"/>
</dbReference>
<dbReference type="InterPro" id="IPR027266">
    <property type="entry name" value="TrmE/GcvT_dom1"/>
</dbReference>
<dbReference type="NCBIfam" id="TIGR00450">
    <property type="entry name" value="mnmE_trmE_thdF"/>
    <property type="match status" value="1"/>
</dbReference>
<dbReference type="NCBIfam" id="TIGR00231">
    <property type="entry name" value="small_GTP"/>
    <property type="match status" value="1"/>
</dbReference>
<dbReference type="PANTHER" id="PTHR42714">
    <property type="entry name" value="TRNA MODIFICATION GTPASE GTPBP3"/>
    <property type="match status" value="1"/>
</dbReference>
<dbReference type="PANTHER" id="PTHR42714:SF2">
    <property type="entry name" value="TRNA MODIFICATION GTPASE GTPBP3, MITOCHONDRIAL"/>
    <property type="match status" value="1"/>
</dbReference>
<dbReference type="Pfam" id="PF01926">
    <property type="entry name" value="MMR_HSR1"/>
    <property type="match status" value="1"/>
</dbReference>
<dbReference type="Pfam" id="PF12631">
    <property type="entry name" value="MnmE_helical"/>
    <property type="match status" value="1"/>
</dbReference>
<dbReference type="Pfam" id="PF10396">
    <property type="entry name" value="TrmE_N"/>
    <property type="match status" value="1"/>
</dbReference>
<dbReference type="SUPFAM" id="SSF52540">
    <property type="entry name" value="P-loop containing nucleoside triphosphate hydrolases"/>
    <property type="match status" value="1"/>
</dbReference>
<dbReference type="PROSITE" id="PS51709">
    <property type="entry name" value="G_TRME"/>
    <property type="match status" value="1"/>
</dbReference>
<feature type="chain" id="PRO_0000345758" description="tRNA modification GTPase MnmE">
    <location>
        <begin position="1"/>
        <end position="444"/>
    </location>
</feature>
<feature type="domain" description="TrmE-type G">
    <location>
        <begin position="216"/>
        <end position="365"/>
    </location>
</feature>
<feature type="binding site" evidence="1">
    <location>
        <position position="23"/>
    </location>
    <ligand>
        <name>(6S)-5-formyl-5,6,7,8-tetrahydrofolate</name>
        <dbReference type="ChEBI" id="CHEBI:57457"/>
    </ligand>
</feature>
<feature type="binding site" evidence="1">
    <location>
        <position position="82"/>
    </location>
    <ligand>
        <name>(6S)-5-formyl-5,6,7,8-tetrahydrofolate</name>
        <dbReference type="ChEBI" id="CHEBI:57457"/>
    </ligand>
</feature>
<feature type="binding site" evidence="1">
    <location>
        <position position="121"/>
    </location>
    <ligand>
        <name>(6S)-5-formyl-5,6,7,8-tetrahydrofolate</name>
        <dbReference type="ChEBI" id="CHEBI:57457"/>
    </ligand>
</feature>
<feature type="binding site" evidence="1">
    <location>
        <begin position="226"/>
        <end position="231"/>
    </location>
    <ligand>
        <name>GTP</name>
        <dbReference type="ChEBI" id="CHEBI:37565"/>
    </ligand>
</feature>
<feature type="binding site" evidence="1">
    <location>
        <position position="226"/>
    </location>
    <ligand>
        <name>K(+)</name>
        <dbReference type="ChEBI" id="CHEBI:29103"/>
    </ligand>
</feature>
<feature type="binding site" evidence="1">
    <location>
        <position position="230"/>
    </location>
    <ligand>
        <name>Mg(2+)</name>
        <dbReference type="ChEBI" id="CHEBI:18420"/>
    </ligand>
</feature>
<feature type="binding site" evidence="1">
    <location>
        <begin position="245"/>
        <end position="251"/>
    </location>
    <ligand>
        <name>GTP</name>
        <dbReference type="ChEBI" id="CHEBI:37565"/>
    </ligand>
</feature>
<feature type="binding site" evidence="1">
    <location>
        <position position="245"/>
    </location>
    <ligand>
        <name>K(+)</name>
        <dbReference type="ChEBI" id="CHEBI:29103"/>
    </ligand>
</feature>
<feature type="binding site" evidence="1">
    <location>
        <position position="247"/>
    </location>
    <ligand>
        <name>K(+)</name>
        <dbReference type="ChEBI" id="CHEBI:29103"/>
    </ligand>
</feature>
<feature type="binding site" evidence="1">
    <location>
        <position position="250"/>
    </location>
    <ligand>
        <name>K(+)</name>
        <dbReference type="ChEBI" id="CHEBI:29103"/>
    </ligand>
</feature>
<feature type="binding site" evidence="1">
    <location>
        <position position="251"/>
    </location>
    <ligand>
        <name>Mg(2+)</name>
        <dbReference type="ChEBI" id="CHEBI:18420"/>
    </ligand>
</feature>
<feature type="binding site" evidence="1">
    <location>
        <begin position="270"/>
        <end position="273"/>
    </location>
    <ligand>
        <name>GTP</name>
        <dbReference type="ChEBI" id="CHEBI:37565"/>
    </ligand>
</feature>
<feature type="binding site" evidence="1">
    <location>
        <position position="444"/>
    </location>
    <ligand>
        <name>(6S)-5-formyl-5,6,7,8-tetrahydrofolate</name>
        <dbReference type="ChEBI" id="CHEBI:57457"/>
    </ligand>
</feature>
<keyword id="KW-0963">Cytoplasm</keyword>
<keyword id="KW-0342">GTP-binding</keyword>
<keyword id="KW-0378">Hydrolase</keyword>
<keyword id="KW-0460">Magnesium</keyword>
<keyword id="KW-0479">Metal-binding</keyword>
<keyword id="KW-0547">Nucleotide-binding</keyword>
<keyword id="KW-0630">Potassium</keyword>
<keyword id="KW-0819">tRNA processing</keyword>
<evidence type="ECO:0000255" key="1">
    <source>
        <dbReference type="HAMAP-Rule" id="MF_00379"/>
    </source>
</evidence>
<organism>
    <name type="scientific">Chlamydia trachomatis serovar L2b (strain UCH-1/proctitis)</name>
    <dbReference type="NCBI Taxonomy" id="471473"/>
    <lineage>
        <taxon>Bacteria</taxon>
        <taxon>Pseudomonadati</taxon>
        <taxon>Chlamydiota</taxon>
        <taxon>Chlamydiia</taxon>
        <taxon>Chlamydiales</taxon>
        <taxon>Chlamydiaceae</taxon>
        <taxon>Chlamydia/Chlamydophila group</taxon>
        <taxon>Chlamydia</taxon>
    </lineage>
</organism>
<gene>
    <name evidence="1" type="primary">mnmE</name>
    <name evidence="1" type="synonym">trmE</name>
    <name type="ordered locus">CTLon_0067</name>
</gene>
<reference key="1">
    <citation type="journal article" date="2008" name="Genome Res.">
        <title>Chlamydia trachomatis: genome sequence analysis of lymphogranuloma venereum isolates.</title>
        <authorList>
            <person name="Thomson N.R."/>
            <person name="Holden M.T.G."/>
            <person name="Carder C."/>
            <person name="Lennard N."/>
            <person name="Lockey S.J."/>
            <person name="Marsh P."/>
            <person name="Skipp P."/>
            <person name="O'Connor C.D."/>
            <person name="Goodhead I."/>
            <person name="Norbertzcak H."/>
            <person name="Harris B."/>
            <person name="Ormond D."/>
            <person name="Rance R."/>
            <person name="Quail M.A."/>
            <person name="Parkhill J."/>
            <person name="Stephens R.S."/>
            <person name="Clarke I.N."/>
        </authorList>
    </citation>
    <scope>NUCLEOTIDE SEQUENCE [LARGE SCALE GENOMIC DNA]</scope>
    <source>
        <strain>UCH-1/proctitis</strain>
    </source>
</reference>